<keyword id="KW-0413">Isomerase</keyword>
<keyword id="KW-1185">Reference proteome</keyword>
<keyword id="KW-0819">tRNA processing</keyword>
<gene>
    <name evidence="1" type="primary">truD</name>
    <name type="ordered locus">PSHAa0686</name>
</gene>
<proteinExistence type="inferred from homology"/>
<name>TRUD_PSET1</name>
<organism>
    <name type="scientific">Pseudoalteromonas translucida (strain TAC 125)</name>
    <dbReference type="NCBI Taxonomy" id="326442"/>
    <lineage>
        <taxon>Bacteria</taxon>
        <taxon>Pseudomonadati</taxon>
        <taxon>Pseudomonadota</taxon>
        <taxon>Gammaproteobacteria</taxon>
        <taxon>Alteromonadales</taxon>
        <taxon>Pseudoalteromonadaceae</taxon>
        <taxon>Pseudoalteromonas</taxon>
    </lineage>
</organism>
<reference key="1">
    <citation type="journal article" date="2005" name="Genome Res.">
        <title>Coping with cold: the genome of the versatile marine Antarctica bacterium Pseudoalteromonas haloplanktis TAC125.</title>
        <authorList>
            <person name="Medigue C."/>
            <person name="Krin E."/>
            <person name="Pascal G."/>
            <person name="Barbe V."/>
            <person name="Bernsel A."/>
            <person name="Bertin P.N."/>
            <person name="Cheung F."/>
            <person name="Cruveiller S."/>
            <person name="D'Amico S."/>
            <person name="Duilio A."/>
            <person name="Fang G."/>
            <person name="Feller G."/>
            <person name="Ho C."/>
            <person name="Mangenot S."/>
            <person name="Marino G."/>
            <person name="Nilsson J."/>
            <person name="Parrilli E."/>
            <person name="Rocha E.P.C."/>
            <person name="Rouy Z."/>
            <person name="Sekowska A."/>
            <person name="Tutino M.L."/>
            <person name="Vallenet D."/>
            <person name="von Heijne G."/>
            <person name="Danchin A."/>
        </authorList>
    </citation>
    <scope>NUCLEOTIDE SEQUENCE [LARGE SCALE GENOMIC DNA]</scope>
    <source>
        <strain>TAC 125</strain>
    </source>
</reference>
<evidence type="ECO:0000255" key="1">
    <source>
        <dbReference type="HAMAP-Rule" id="MF_01082"/>
    </source>
</evidence>
<sequence length="349" mass="39233">MSDLNYLYGAPLSKADFKTTAEDFMVDEDLGIEFTGSGEHVCLQVVKKGENTQYVAKLIAQRAGVSPRDVSYAGMKDRHGVCSQWFSVKVPIKKPIDFSDLNSESVFVVSQQRHERKLRTGCHKGNKFTITLRNVTDPLDILCRINAVRSGVPNYFGEQRFGRDGHNLVMAEKMFAGERIRDKKLRGIIISAARSHVFNQLVSLRVKEHGLAKTMHREVFMLSGSNAFFEDAISDENIARLASGDIMMSAPMVGKSEKGLTEQEKVWLGPYQSWCDGLGELGLKNERRMLRLIPQDFSVETIDESTLKLSFGLPKGCFATALLRELVDYTDASPRERKEKDSKDEDPIK</sequence>
<accession>Q3IDQ4</accession>
<dbReference type="EC" id="5.4.99.27" evidence="1"/>
<dbReference type="EMBL" id="CR954246">
    <property type="protein sequence ID" value="CAI85770.1"/>
    <property type="molecule type" value="Genomic_DNA"/>
</dbReference>
<dbReference type="SMR" id="Q3IDQ4"/>
<dbReference type="STRING" id="326442.PSHAa0686"/>
<dbReference type="KEGG" id="pha:PSHAa0686"/>
<dbReference type="PATRIC" id="fig|326442.8.peg.649"/>
<dbReference type="eggNOG" id="COG0585">
    <property type="taxonomic scope" value="Bacteria"/>
</dbReference>
<dbReference type="HOGENOM" id="CLU_005281_4_0_6"/>
<dbReference type="BioCyc" id="PHAL326442:PSHA_RS03355-MONOMER"/>
<dbReference type="Proteomes" id="UP000006843">
    <property type="component" value="Chromosome I"/>
</dbReference>
<dbReference type="GO" id="GO:0005829">
    <property type="term" value="C:cytosol"/>
    <property type="evidence" value="ECO:0007669"/>
    <property type="project" value="TreeGrafter"/>
</dbReference>
<dbReference type="GO" id="GO:0003723">
    <property type="term" value="F:RNA binding"/>
    <property type="evidence" value="ECO:0007669"/>
    <property type="project" value="InterPro"/>
</dbReference>
<dbReference type="GO" id="GO:0160150">
    <property type="term" value="F:tRNA pseudouridine(13) synthase activity"/>
    <property type="evidence" value="ECO:0007669"/>
    <property type="project" value="UniProtKB-EC"/>
</dbReference>
<dbReference type="GO" id="GO:0031119">
    <property type="term" value="P:tRNA pseudouridine synthesis"/>
    <property type="evidence" value="ECO:0007669"/>
    <property type="project" value="UniProtKB-UniRule"/>
</dbReference>
<dbReference type="CDD" id="cd02575">
    <property type="entry name" value="PseudoU_synth_EcTruD"/>
    <property type="match status" value="1"/>
</dbReference>
<dbReference type="Gene3D" id="3.30.2350.20">
    <property type="entry name" value="TruD, catalytic domain"/>
    <property type="match status" value="1"/>
</dbReference>
<dbReference type="Gene3D" id="3.30.2340.10">
    <property type="entry name" value="TruD, insertion domain"/>
    <property type="match status" value="1"/>
</dbReference>
<dbReference type="HAMAP" id="MF_01082">
    <property type="entry name" value="TruD"/>
    <property type="match status" value="1"/>
</dbReference>
<dbReference type="InterPro" id="IPR020103">
    <property type="entry name" value="PsdUridine_synth_cat_dom_sf"/>
</dbReference>
<dbReference type="InterPro" id="IPR001656">
    <property type="entry name" value="PsdUridine_synth_TruD"/>
</dbReference>
<dbReference type="InterPro" id="IPR011760">
    <property type="entry name" value="PsdUridine_synth_TruD_insert"/>
</dbReference>
<dbReference type="InterPro" id="IPR042214">
    <property type="entry name" value="TruD_catalytic"/>
</dbReference>
<dbReference type="InterPro" id="IPR043165">
    <property type="entry name" value="TruD_insert_sf"/>
</dbReference>
<dbReference type="InterPro" id="IPR050170">
    <property type="entry name" value="TruD_pseudoU_synthase"/>
</dbReference>
<dbReference type="PANTHER" id="PTHR47811">
    <property type="entry name" value="TRNA PSEUDOURIDINE SYNTHASE D"/>
    <property type="match status" value="1"/>
</dbReference>
<dbReference type="PANTHER" id="PTHR47811:SF1">
    <property type="entry name" value="TRNA PSEUDOURIDINE SYNTHASE D"/>
    <property type="match status" value="1"/>
</dbReference>
<dbReference type="Pfam" id="PF01142">
    <property type="entry name" value="TruD"/>
    <property type="match status" value="2"/>
</dbReference>
<dbReference type="SUPFAM" id="SSF55120">
    <property type="entry name" value="Pseudouridine synthase"/>
    <property type="match status" value="1"/>
</dbReference>
<dbReference type="PROSITE" id="PS50984">
    <property type="entry name" value="TRUD"/>
    <property type="match status" value="1"/>
</dbReference>
<protein>
    <recommendedName>
        <fullName evidence="1">tRNA pseudouridine synthase D</fullName>
        <ecNumber evidence="1">5.4.99.27</ecNumber>
    </recommendedName>
    <alternativeName>
        <fullName evidence="1">tRNA pseudouridine(13) synthase</fullName>
    </alternativeName>
    <alternativeName>
        <fullName evidence="1">tRNA pseudouridylate synthase D</fullName>
    </alternativeName>
    <alternativeName>
        <fullName evidence="1">tRNA-uridine isomerase D</fullName>
    </alternativeName>
</protein>
<feature type="chain" id="PRO_0000230144" description="tRNA pseudouridine synthase D">
    <location>
        <begin position="1"/>
        <end position="349"/>
    </location>
</feature>
<feature type="domain" description="TRUD" evidence="1">
    <location>
        <begin position="151"/>
        <end position="309"/>
    </location>
</feature>
<feature type="active site" description="Nucleophile" evidence="1">
    <location>
        <position position="77"/>
    </location>
</feature>
<comment type="function">
    <text evidence="1">Responsible for synthesis of pseudouridine from uracil-13 in transfer RNAs.</text>
</comment>
<comment type="catalytic activity">
    <reaction evidence="1">
        <text>uridine(13) in tRNA = pseudouridine(13) in tRNA</text>
        <dbReference type="Rhea" id="RHEA:42540"/>
        <dbReference type="Rhea" id="RHEA-COMP:10105"/>
        <dbReference type="Rhea" id="RHEA-COMP:10106"/>
        <dbReference type="ChEBI" id="CHEBI:65314"/>
        <dbReference type="ChEBI" id="CHEBI:65315"/>
        <dbReference type="EC" id="5.4.99.27"/>
    </reaction>
</comment>
<comment type="similarity">
    <text evidence="1">Belongs to the pseudouridine synthase TruD family.</text>
</comment>